<evidence type="ECO:0000255" key="1">
    <source>
        <dbReference type="HAMAP-Rule" id="MF_00500"/>
    </source>
</evidence>
<evidence type="ECO:0000256" key="2">
    <source>
        <dbReference type="SAM" id="MobiDB-lite"/>
    </source>
</evidence>
<evidence type="ECO:0000305" key="3"/>
<protein>
    <recommendedName>
        <fullName evidence="1">Small ribosomal subunit protein bS20</fullName>
    </recommendedName>
    <alternativeName>
        <fullName evidence="3">30S ribosomal protein S20</fullName>
    </alternativeName>
</protein>
<name>RS20_KLEP3</name>
<feature type="chain" id="PRO_1000126458" description="Small ribosomal subunit protein bS20">
    <location>
        <begin position="1"/>
        <end position="87"/>
    </location>
</feature>
<feature type="region of interest" description="Disordered" evidence="2">
    <location>
        <begin position="1"/>
        <end position="26"/>
    </location>
</feature>
<keyword id="KW-0687">Ribonucleoprotein</keyword>
<keyword id="KW-0689">Ribosomal protein</keyword>
<keyword id="KW-0694">RNA-binding</keyword>
<keyword id="KW-0699">rRNA-binding</keyword>
<proteinExistence type="inferred from homology"/>
<sequence length="87" mass="9670">MANIKSAKKRAVQSEKARKHNASRRSMMRTFIKKVYAAIEAGDKAAAQKAFNEMQPIVDRQAAKGLIHKNKAARHKANLTAQINKLA</sequence>
<organism>
    <name type="scientific">Klebsiella pneumoniae (strain 342)</name>
    <dbReference type="NCBI Taxonomy" id="507522"/>
    <lineage>
        <taxon>Bacteria</taxon>
        <taxon>Pseudomonadati</taxon>
        <taxon>Pseudomonadota</taxon>
        <taxon>Gammaproteobacteria</taxon>
        <taxon>Enterobacterales</taxon>
        <taxon>Enterobacteriaceae</taxon>
        <taxon>Klebsiella/Raoultella group</taxon>
        <taxon>Klebsiella</taxon>
        <taxon>Klebsiella pneumoniae complex</taxon>
    </lineage>
</organism>
<comment type="function">
    <text evidence="1">Binds directly to 16S ribosomal RNA.</text>
</comment>
<comment type="similarity">
    <text evidence="1">Belongs to the bacterial ribosomal protein bS20 family.</text>
</comment>
<dbReference type="EMBL" id="CP000964">
    <property type="protein sequence ID" value="ACI11305.1"/>
    <property type="molecule type" value="Genomic_DNA"/>
</dbReference>
<dbReference type="SMR" id="B5Y237"/>
<dbReference type="KEGG" id="kpe:KPK_4737"/>
<dbReference type="HOGENOM" id="CLU_160655_4_0_6"/>
<dbReference type="Proteomes" id="UP000001734">
    <property type="component" value="Chromosome"/>
</dbReference>
<dbReference type="GO" id="GO:0005829">
    <property type="term" value="C:cytosol"/>
    <property type="evidence" value="ECO:0007669"/>
    <property type="project" value="TreeGrafter"/>
</dbReference>
<dbReference type="GO" id="GO:0015935">
    <property type="term" value="C:small ribosomal subunit"/>
    <property type="evidence" value="ECO:0007669"/>
    <property type="project" value="TreeGrafter"/>
</dbReference>
<dbReference type="GO" id="GO:0070181">
    <property type="term" value="F:small ribosomal subunit rRNA binding"/>
    <property type="evidence" value="ECO:0007669"/>
    <property type="project" value="TreeGrafter"/>
</dbReference>
<dbReference type="GO" id="GO:0003735">
    <property type="term" value="F:structural constituent of ribosome"/>
    <property type="evidence" value="ECO:0007669"/>
    <property type="project" value="InterPro"/>
</dbReference>
<dbReference type="GO" id="GO:0006412">
    <property type="term" value="P:translation"/>
    <property type="evidence" value="ECO:0007669"/>
    <property type="project" value="UniProtKB-UniRule"/>
</dbReference>
<dbReference type="FunFam" id="1.20.58.110:FF:000001">
    <property type="entry name" value="30S ribosomal protein S20"/>
    <property type="match status" value="1"/>
</dbReference>
<dbReference type="Gene3D" id="1.20.58.110">
    <property type="entry name" value="Ribosomal protein S20"/>
    <property type="match status" value="1"/>
</dbReference>
<dbReference type="HAMAP" id="MF_00500">
    <property type="entry name" value="Ribosomal_bS20"/>
    <property type="match status" value="1"/>
</dbReference>
<dbReference type="InterPro" id="IPR002583">
    <property type="entry name" value="Ribosomal_bS20"/>
</dbReference>
<dbReference type="InterPro" id="IPR036510">
    <property type="entry name" value="Ribosomal_bS20_sf"/>
</dbReference>
<dbReference type="NCBIfam" id="TIGR00029">
    <property type="entry name" value="S20"/>
    <property type="match status" value="1"/>
</dbReference>
<dbReference type="PANTHER" id="PTHR33398">
    <property type="entry name" value="30S RIBOSOMAL PROTEIN S20"/>
    <property type="match status" value="1"/>
</dbReference>
<dbReference type="PANTHER" id="PTHR33398:SF1">
    <property type="entry name" value="SMALL RIBOSOMAL SUBUNIT PROTEIN BS20C"/>
    <property type="match status" value="1"/>
</dbReference>
<dbReference type="Pfam" id="PF01649">
    <property type="entry name" value="Ribosomal_S20p"/>
    <property type="match status" value="1"/>
</dbReference>
<dbReference type="SUPFAM" id="SSF46992">
    <property type="entry name" value="Ribosomal protein S20"/>
    <property type="match status" value="1"/>
</dbReference>
<reference key="1">
    <citation type="journal article" date="2008" name="PLoS Genet.">
        <title>Complete genome sequence of the N2-fixing broad host range endophyte Klebsiella pneumoniae 342 and virulence predictions verified in mice.</title>
        <authorList>
            <person name="Fouts D.E."/>
            <person name="Tyler H.L."/>
            <person name="DeBoy R.T."/>
            <person name="Daugherty S."/>
            <person name="Ren Q."/>
            <person name="Badger J.H."/>
            <person name="Durkin A.S."/>
            <person name="Huot H."/>
            <person name="Shrivastava S."/>
            <person name="Kothari S."/>
            <person name="Dodson R.J."/>
            <person name="Mohamoud Y."/>
            <person name="Khouri H."/>
            <person name="Roesch L.F.W."/>
            <person name="Krogfelt K.A."/>
            <person name="Struve C."/>
            <person name="Triplett E.W."/>
            <person name="Methe B.A."/>
        </authorList>
    </citation>
    <scope>NUCLEOTIDE SEQUENCE [LARGE SCALE GENOMIC DNA]</scope>
    <source>
        <strain>342</strain>
    </source>
</reference>
<accession>B5Y237</accession>
<gene>
    <name evidence="1" type="primary">rpsT</name>
    <name type="ordered locus">KPK_4737</name>
</gene>